<protein>
    <recommendedName>
        <fullName evidence="2">Ornithine carbamoyltransferase</fullName>
        <shortName evidence="2">OTCase</shortName>
        <ecNumber evidence="2">2.1.3.3</ecNumber>
    </recommendedName>
</protein>
<comment type="function">
    <text evidence="1">Reversibly catalyzes the transfer of the carbamoyl group from carbamoyl phosphate (CP) to the N(epsilon) atom of ornithine (ORN) to produce L-citrulline.</text>
</comment>
<comment type="catalytic activity">
    <reaction evidence="2">
        <text>carbamoyl phosphate + L-ornithine = L-citrulline + phosphate + H(+)</text>
        <dbReference type="Rhea" id="RHEA:19513"/>
        <dbReference type="ChEBI" id="CHEBI:15378"/>
        <dbReference type="ChEBI" id="CHEBI:43474"/>
        <dbReference type="ChEBI" id="CHEBI:46911"/>
        <dbReference type="ChEBI" id="CHEBI:57743"/>
        <dbReference type="ChEBI" id="CHEBI:58228"/>
        <dbReference type="EC" id="2.1.3.3"/>
    </reaction>
</comment>
<comment type="pathway">
    <text evidence="2">Amino-acid biosynthesis; L-arginine biosynthesis; L-arginine from L-ornithine and carbamoyl phosphate: step 1/3.</text>
</comment>
<comment type="subcellular location">
    <subcellularLocation>
        <location evidence="2">Cytoplasm</location>
    </subcellularLocation>
</comment>
<comment type="similarity">
    <text evidence="2">Belongs to the aspartate/ornithine carbamoyltransferase superfamily. OTCase family.</text>
</comment>
<evidence type="ECO:0000250" key="1"/>
<evidence type="ECO:0000255" key="2">
    <source>
        <dbReference type="HAMAP-Rule" id="MF_01109"/>
    </source>
</evidence>
<reference key="1">
    <citation type="journal article" date="2002" name="Genome Res.">
        <title>A complete sequence of the T. tengcongensis genome.</title>
        <authorList>
            <person name="Bao Q."/>
            <person name="Tian Y."/>
            <person name="Li W."/>
            <person name="Xu Z."/>
            <person name="Xuan Z."/>
            <person name="Hu S."/>
            <person name="Dong W."/>
            <person name="Yang J."/>
            <person name="Chen Y."/>
            <person name="Xue Y."/>
            <person name="Xu Y."/>
            <person name="Lai X."/>
            <person name="Huang L."/>
            <person name="Dong X."/>
            <person name="Ma Y."/>
            <person name="Ling L."/>
            <person name="Tan H."/>
            <person name="Chen R."/>
            <person name="Wang J."/>
            <person name="Yu J."/>
            <person name="Yang H."/>
        </authorList>
    </citation>
    <scope>NUCLEOTIDE SEQUENCE [LARGE SCALE GENOMIC DNA]</scope>
    <source>
        <strain>DSM 15242 / JCM 11007 / NBRC 100824 / MB4</strain>
    </source>
</reference>
<organism>
    <name type="scientific">Caldanaerobacter subterraneus subsp. tengcongensis (strain DSM 15242 / JCM 11007 / NBRC 100824 / MB4)</name>
    <name type="common">Thermoanaerobacter tengcongensis</name>
    <dbReference type="NCBI Taxonomy" id="273068"/>
    <lineage>
        <taxon>Bacteria</taxon>
        <taxon>Bacillati</taxon>
        <taxon>Bacillota</taxon>
        <taxon>Clostridia</taxon>
        <taxon>Thermoanaerobacterales</taxon>
        <taxon>Thermoanaerobacteraceae</taxon>
        <taxon>Caldanaerobacter</taxon>
    </lineage>
</organism>
<sequence>MAFNLKGRSLLTLKEYTPQEIRYLLDIAKQVKAERKAGIVHQRFVGKTIALIFEKRSTRTRCAFETAFGEEGGHPVFLSTDDIQLGAKESIEDTARVLGRMFDAIEFRGFKQETVEILAKYAGVPVYNGLTDEYHPTQVLADLMTIEEEFGSLKGRKLVFVGDGRNNMANTLAIGCAKMGMHYVINSPKELWPSESFIKEIKDMAAENGGTFELTSVPGEGLEGADAIYTDVWASMGEEAKAEERERLLRPYQVNEEMMKKTGRDDTIFLHCLPAVKGQEVTFEVIEGKQSRVWDQAENRKHTIKAVLIATLL</sequence>
<feature type="chain" id="PRO_0000113051" description="Ornithine carbamoyltransferase">
    <location>
        <begin position="1"/>
        <end position="313"/>
    </location>
</feature>
<feature type="binding site" evidence="2">
    <location>
        <begin position="57"/>
        <end position="60"/>
    </location>
    <ligand>
        <name>carbamoyl phosphate</name>
        <dbReference type="ChEBI" id="CHEBI:58228"/>
    </ligand>
</feature>
<feature type="binding site" evidence="2">
    <location>
        <position position="84"/>
    </location>
    <ligand>
        <name>carbamoyl phosphate</name>
        <dbReference type="ChEBI" id="CHEBI:58228"/>
    </ligand>
</feature>
<feature type="binding site" evidence="2">
    <location>
        <position position="108"/>
    </location>
    <ligand>
        <name>carbamoyl phosphate</name>
        <dbReference type="ChEBI" id="CHEBI:58228"/>
    </ligand>
</feature>
<feature type="binding site" evidence="2">
    <location>
        <begin position="135"/>
        <end position="138"/>
    </location>
    <ligand>
        <name>carbamoyl phosphate</name>
        <dbReference type="ChEBI" id="CHEBI:58228"/>
    </ligand>
</feature>
<feature type="binding site" evidence="2">
    <location>
        <position position="167"/>
    </location>
    <ligand>
        <name>L-ornithine</name>
        <dbReference type="ChEBI" id="CHEBI:46911"/>
    </ligand>
</feature>
<feature type="binding site" evidence="2">
    <location>
        <position position="231"/>
    </location>
    <ligand>
        <name>L-ornithine</name>
        <dbReference type="ChEBI" id="CHEBI:46911"/>
    </ligand>
</feature>
<feature type="binding site" evidence="2">
    <location>
        <begin position="235"/>
        <end position="236"/>
    </location>
    <ligand>
        <name>L-ornithine</name>
        <dbReference type="ChEBI" id="CHEBI:46911"/>
    </ligand>
</feature>
<feature type="binding site" evidence="2">
    <location>
        <begin position="272"/>
        <end position="273"/>
    </location>
    <ligand>
        <name>carbamoyl phosphate</name>
        <dbReference type="ChEBI" id="CHEBI:58228"/>
    </ligand>
</feature>
<feature type="binding site" evidence="2">
    <location>
        <position position="300"/>
    </location>
    <ligand>
        <name>carbamoyl phosphate</name>
        <dbReference type="ChEBI" id="CHEBI:58228"/>
    </ligand>
</feature>
<name>OTC_CALS4</name>
<proteinExistence type="inferred from homology"/>
<dbReference type="EC" id="2.1.3.3" evidence="2"/>
<dbReference type="EMBL" id="AE008691">
    <property type="protein sequence ID" value="AAM23808.1"/>
    <property type="molecule type" value="Genomic_DNA"/>
</dbReference>
<dbReference type="RefSeq" id="WP_011024958.1">
    <property type="nucleotide sequence ID" value="NC_003869.1"/>
</dbReference>
<dbReference type="SMR" id="Q8RCA4"/>
<dbReference type="STRING" id="273068.TTE0532"/>
<dbReference type="KEGG" id="tte:TTE0532"/>
<dbReference type="eggNOG" id="COG0078">
    <property type="taxonomic scope" value="Bacteria"/>
</dbReference>
<dbReference type="HOGENOM" id="CLU_043846_3_2_9"/>
<dbReference type="OrthoDB" id="9802587at2"/>
<dbReference type="UniPathway" id="UPA00068">
    <property type="reaction ID" value="UER00112"/>
</dbReference>
<dbReference type="Proteomes" id="UP000000555">
    <property type="component" value="Chromosome"/>
</dbReference>
<dbReference type="GO" id="GO:0005737">
    <property type="term" value="C:cytoplasm"/>
    <property type="evidence" value="ECO:0007669"/>
    <property type="project" value="UniProtKB-SubCell"/>
</dbReference>
<dbReference type="GO" id="GO:0016597">
    <property type="term" value="F:amino acid binding"/>
    <property type="evidence" value="ECO:0007669"/>
    <property type="project" value="InterPro"/>
</dbReference>
<dbReference type="GO" id="GO:0004585">
    <property type="term" value="F:ornithine carbamoyltransferase activity"/>
    <property type="evidence" value="ECO:0007669"/>
    <property type="project" value="UniProtKB-UniRule"/>
</dbReference>
<dbReference type="GO" id="GO:0042450">
    <property type="term" value="P:arginine biosynthetic process via ornithine"/>
    <property type="evidence" value="ECO:0007669"/>
    <property type="project" value="TreeGrafter"/>
</dbReference>
<dbReference type="GO" id="GO:0019240">
    <property type="term" value="P:citrulline biosynthetic process"/>
    <property type="evidence" value="ECO:0007669"/>
    <property type="project" value="TreeGrafter"/>
</dbReference>
<dbReference type="GO" id="GO:0006526">
    <property type="term" value="P:L-arginine biosynthetic process"/>
    <property type="evidence" value="ECO:0007669"/>
    <property type="project" value="UniProtKB-UniRule"/>
</dbReference>
<dbReference type="FunFam" id="3.40.50.1370:FF:000008">
    <property type="entry name" value="Ornithine carbamoyltransferase"/>
    <property type="match status" value="1"/>
</dbReference>
<dbReference type="Gene3D" id="3.40.50.1370">
    <property type="entry name" value="Aspartate/ornithine carbamoyltransferase"/>
    <property type="match status" value="2"/>
</dbReference>
<dbReference type="HAMAP" id="MF_01109">
    <property type="entry name" value="OTCase"/>
    <property type="match status" value="1"/>
</dbReference>
<dbReference type="InterPro" id="IPR006132">
    <property type="entry name" value="Asp/Orn_carbamoyltranf_P-bd"/>
</dbReference>
<dbReference type="InterPro" id="IPR006130">
    <property type="entry name" value="Asp/Orn_carbamoylTrfase"/>
</dbReference>
<dbReference type="InterPro" id="IPR036901">
    <property type="entry name" value="Asp/Orn_carbamoylTrfase_sf"/>
</dbReference>
<dbReference type="InterPro" id="IPR006131">
    <property type="entry name" value="Asp_carbamoyltransf_Asp/Orn-bd"/>
</dbReference>
<dbReference type="InterPro" id="IPR002292">
    <property type="entry name" value="Orn/put_carbamltrans"/>
</dbReference>
<dbReference type="InterPro" id="IPR024904">
    <property type="entry name" value="OTCase_ArgI"/>
</dbReference>
<dbReference type="NCBIfam" id="TIGR00658">
    <property type="entry name" value="orni_carb_tr"/>
    <property type="match status" value="1"/>
</dbReference>
<dbReference type="NCBIfam" id="NF001986">
    <property type="entry name" value="PRK00779.1"/>
    <property type="match status" value="1"/>
</dbReference>
<dbReference type="PANTHER" id="PTHR45753:SF2">
    <property type="entry name" value="ORNITHINE CARBAMOYLTRANSFERASE"/>
    <property type="match status" value="1"/>
</dbReference>
<dbReference type="PANTHER" id="PTHR45753">
    <property type="entry name" value="ORNITHINE CARBAMOYLTRANSFERASE, MITOCHONDRIAL"/>
    <property type="match status" value="1"/>
</dbReference>
<dbReference type="Pfam" id="PF00185">
    <property type="entry name" value="OTCace"/>
    <property type="match status" value="1"/>
</dbReference>
<dbReference type="Pfam" id="PF02729">
    <property type="entry name" value="OTCace_N"/>
    <property type="match status" value="1"/>
</dbReference>
<dbReference type="PRINTS" id="PR00100">
    <property type="entry name" value="AOTCASE"/>
</dbReference>
<dbReference type="PRINTS" id="PR00102">
    <property type="entry name" value="OTCASE"/>
</dbReference>
<dbReference type="SUPFAM" id="SSF53671">
    <property type="entry name" value="Aspartate/ornithine carbamoyltransferase"/>
    <property type="match status" value="1"/>
</dbReference>
<dbReference type="PROSITE" id="PS00097">
    <property type="entry name" value="CARBAMOYLTRANSFERASE"/>
    <property type="match status" value="1"/>
</dbReference>
<accession>Q8RCA4</accession>
<keyword id="KW-0028">Amino-acid biosynthesis</keyword>
<keyword id="KW-0055">Arginine biosynthesis</keyword>
<keyword id="KW-0963">Cytoplasm</keyword>
<keyword id="KW-1185">Reference proteome</keyword>
<keyword id="KW-0808">Transferase</keyword>
<gene>
    <name evidence="2" type="primary">argF</name>
    <name type="ordered locus">TTE0532</name>
</gene>